<proteinExistence type="inferred from homology"/>
<protein>
    <recommendedName>
        <fullName evidence="4">Tyrosine recombinase THA_404</fullName>
    </recommendedName>
</protein>
<dbReference type="EMBL" id="CP001185">
    <property type="protein sequence ID" value="ACJ74897.1"/>
    <property type="molecule type" value="Genomic_DNA"/>
</dbReference>
<dbReference type="RefSeq" id="WP_012579552.1">
    <property type="nucleotide sequence ID" value="NC_011653.1"/>
</dbReference>
<dbReference type="SMR" id="B7IFN3"/>
<dbReference type="STRING" id="484019.THA_404"/>
<dbReference type="KEGG" id="taf:THA_404"/>
<dbReference type="eggNOG" id="COG4974">
    <property type="taxonomic scope" value="Bacteria"/>
</dbReference>
<dbReference type="HOGENOM" id="CLU_027562_9_2_0"/>
<dbReference type="OrthoDB" id="9785687at2"/>
<dbReference type="Proteomes" id="UP000002453">
    <property type="component" value="Chromosome"/>
</dbReference>
<dbReference type="GO" id="GO:0005737">
    <property type="term" value="C:cytoplasm"/>
    <property type="evidence" value="ECO:0007669"/>
    <property type="project" value="UniProtKB-SubCell"/>
</dbReference>
<dbReference type="GO" id="GO:0003677">
    <property type="term" value="F:DNA binding"/>
    <property type="evidence" value="ECO:0007669"/>
    <property type="project" value="UniProtKB-KW"/>
</dbReference>
<dbReference type="GO" id="GO:0051301">
    <property type="term" value="P:cell division"/>
    <property type="evidence" value="ECO:0007669"/>
    <property type="project" value="UniProtKB-KW"/>
</dbReference>
<dbReference type="GO" id="GO:0007059">
    <property type="term" value="P:chromosome segregation"/>
    <property type="evidence" value="ECO:0007669"/>
    <property type="project" value="UniProtKB-KW"/>
</dbReference>
<dbReference type="GO" id="GO:0015074">
    <property type="term" value="P:DNA integration"/>
    <property type="evidence" value="ECO:0007669"/>
    <property type="project" value="UniProtKB-KW"/>
</dbReference>
<dbReference type="GO" id="GO:0006310">
    <property type="term" value="P:DNA recombination"/>
    <property type="evidence" value="ECO:0007669"/>
    <property type="project" value="UniProtKB-KW"/>
</dbReference>
<dbReference type="CDD" id="cd01193">
    <property type="entry name" value="INT_IntI_C"/>
    <property type="match status" value="1"/>
</dbReference>
<dbReference type="Gene3D" id="1.10.150.130">
    <property type="match status" value="1"/>
</dbReference>
<dbReference type="Gene3D" id="1.10.443.10">
    <property type="entry name" value="Intergrase catalytic core"/>
    <property type="match status" value="1"/>
</dbReference>
<dbReference type="InterPro" id="IPR044068">
    <property type="entry name" value="CB"/>
</dbReference>
<dbReference type="InterPro" id="IPR011010">
    <property type="entry name" value="DNA_brk_join_enz"/>
</dbReference>
<dbReference type="InterPro" id="IPR013762">
    <property type="entry name" value="Integrase-like_cat_sf"/>
</dbReference>
<dbReference type="InterPro" id="IPR002104">
    <property type="entry name" value="Integrase_catalytic"/>
</dbReference>
<dbReference type="InterPro" id="IPR010998">
    <property type="entry name" value="Integrase_recombinase_N"/>
</dbReference>
<dbReference type="InterPro" id="IPR004107">
    <property type="entry name" value="Integrase_SAM-like_N"/>
</dbReference>
<dbReference type="InterPro" id="IPR050090">
    <property type="entry name" value="Tyrosine_recombinase_XerCD"/>
</dbReference>
<dbReference type="NCBIfam" id="NF040815">
    <property type="entry name" value="recomb_XerA_Arch"/>
    <property type="match status" value="1"/>
</dbReference>
<dbReference type="PANTHER" id="PTHR30349:SF41">
    <property type="entry name" value="INTEGRASE_RECOMBINASE PROTEIN MJ0367-RELATED"/>
    <property type="match status" value="1"/>
</dbReference>
<dbReference type="PANTHER" id="PTHR30349">
    <property type="entry name" value="PHAGE INTEGRASE-RELATED"/>
    <property type="match status" value="1"/>
</dbReference>
<dbReference type="Pfam" id="PF02899">
    <property type="entry name" value="Phage_int_SAM_1"/>
    <property type="match status" value="1"/>
</dbReference>
<dbReference type="Pfam" id="PF00589">
    <property type="entry name" value="Phage_integrase"/>
    <property type="match status" value="1"/>
</dbReference>
<dbReference type="SUPFAM" id="SSF56349">
    <property type="entry name" value="DNA breaking-rejoining enzymes"/>
    <property type="match status" value="1"/>
</dbReference>
<dbReference type="PROSITE" id="PS51900">
    <property type="entry name" value="CB"/>
    <property type="match status" value="1"/>
</dbReference>
<dbReference type="PROSITE" id="PS51898">
    <property type="entry name" value="TYR_RECOMBINASE"/>
    <property type="match status" value="1"/>
</dbReference>
<evidence type="ECO:0000250" key="1">
    <source>
        <dbReference type="UniProtKB" id="P0A8P8"/>
    </source>
</evidence>
<evidence type="ECO:0000255" key="2">
    <source>
        <dbReference type="PROSITE-ProRule" id="PRU01246"/>
    </source>
</evidence>
<evidence type="ECO:0000255" key="3">
    <source>
        <dbReference type="PROSITE-ProRule" id="PRU01248"/>
    </source>
</evidence>
<evidence type="ECO:0000305" key="4"/>
<sequence length="283" mass="32995">MDKVIEMFSDYLAHVRRHSENTLKAYKKDVRKFLTYVGKQINNIERKDVEEFLKALSKGDITGESPRETTISRYISSLNSFFNYLELSGMIYENPMERIKHPRIRRKIPDFLTEDEVSSLIGAFNEENELRQKTAISLLYYAGLRISELCNLRTTDISFIPPFLRVEMGKGRKDRLVPLPDKVIPILKKYIDLENPKIFVFENGKKHVHPSTVFRWLKEGVKRANIKKDVHPHTLRHSYATHLIRKGVNIKVVQELLGHTNLSTTSIYLHVADQEKFDAVKKL</sequence>
<keyword id="KW-0131">Cell cycle</keyword>
<keyword id="KW-0132">Cell division</keyword>
<keyword id="KW-0159">Chromosome partition</keyword>
<keyword id="KW-0963">Cytoplasm</keyword>
<keyword id="KW-0229">DNA integration</keyword>
<keyword id="KW-0233">DNA recombination</keyword>
<keyword id="KW-0238">DNA-binding</keyword>
<keyword id="KW-1185">Reference proteome</keyword>
<accession>B7IFN3</accession>
<name>XER_THEAB</name>
<organism>
    <name type="scientific">Thermosipho africanus (strain TCF52B)</name>
    <dbReference type="NCBI Taxonomy" id="484019"/>
    <lineage>
        <taxon>Bacteria</taxon>
        <taxon>Thermotogati</taxon>
        <taxon>Thermotogota</taxon>
        <taxon>Thermotogae</taxon>
        <taxon>Thermotogales</taxon>
        <taxon>Fervidobacteriaceae</taxon>
        <taxon>Thermosipho</taxon>
    </lineage>
</organism>
<reference key="1">
    <citation type="journal article" date="2009" name="J. Bacteriol.">
        <title>The genome of Thermosipho africanus TCF52B: lateral genetic connections to the Firmicutes and Archaea.</title>
        <authorList>
            <person name="Nesboe C.L."/>
            <person name="Bapteste E."/>
            <person name="Curtis B."/>
            <person name="Dahle H."/>
            <person name="Lopez P."/>
            <person name="Macleod D."/>
            <person name="Dlutek M."/>
            <person name="Bowman S."/>
            <person name="Zhaxybayeva O."/>
            <person name="Birkeland N.-K."/>
            <person name="Doolittle W.F."/>
        </authorList>
    </citation>
    <scope>NUCLEOTIDE SEQUENCE [LARGE SCALE GENOMIC DNA]</scope>
    <source>
        <strain>TCF52B</strain>
    </source>
</reference>
<comment type="function">
    <text evidence="1">Site-specific tyrosine recombinase, which acts by catalyzing the cutting and rejoining of the recombining DNA molecules.</text>
</comment>
<comment type="subcellular location">
    <subcellularLocation>
        <location evidence="4">Cytoplasm</location>
    </subcellularLocation>
</comment>
<comment type="similarity">
    <text evidence="4">Belongs to the 'phage' integrase family.</text>
</comment>
<gene>
    <name type="ordered locus">THA_404</name>
</gene>
<feature type="chain" id="PRO_1000215961" description="Tyrosine recombinase THA_404">
    <location>
        <begin position="1"/>
        <end position="283"/>
    </location>
</feature>
<feature type="domain" description="Core-binding (CB)" evidence="3">
    <location>
        <begin position="1"/>
        <end position="86"/>
    </location>
</feature>
<feature type="domain" description="Tyr recombinase" evidence="2">
    <location>
        <begin position="107"/>
        <end position="281"/>
    </location>
</feature>
<feature type="active site" evidence="2">
    <location>
        <position position="145"/>
    </location>
</feature>
<feature type="active site" evidence="2">
    <location>
        <position position="170"/>
    </location>
</feature>
<feature type="active site" evidence="2">
    <location>
        <position position="233"/>
    </location>
</feature>
<feature type="active site" evidence="2">
    <location>
        <position position="236"/>
    </location>
</feature>
<feature type="active site" evidence="2">
    <location>
        <position position="259"/>
    </location>
</feature>
<feature type="active site" description="O-(3'-phospho-DNA)-tyrosine intermediate" evidence="2">
    <location>
        <position position="268"/>
    </location>
</feature>